<dbReference type="EMBL" id="L33341">
    <property type="protein sequence ID" value="AAA28445.1"/>
    <property type="molecule type" value="Genomic_DNA"/>
</dbReference>
<dbReference type="EMBL" id="AE013599">
    <property type="protein sequence ID" value="AAF58559.2"/>
    <property type="molecule type" value="Genomic_DNA"/>
</dbReference>
<dbReference type="EMBL" id="AY118862">
    <property type="protein sequence ID" value="AAM50722.1"/>
    <property type="molecule type" value="mRNA"/>
</dbReference>
<dbReference type="RefSeq" id="NP_523708.2">
    <property type="nucleotide sequence ID" value="NM_078984.4"/>
</dbReference>
<dbReference type="SMR" id="Q24297"/>
<dbReference type="BioGRID" id="62093">
    <property type="interactions" value="16"/>
</dbReference>
<dbReference type="ComplexPortal" id="CPX-2559">
    <property type="entry name" value="U7 small nuclear ribonucleoprotein complex"/>
</dbReference>
<dbReference type="DIP" id="DIP-20723N"/>
<dbReference type="FunCoup" id="Q24297">
    <property type="interactions" value="1528"/>
</dbReference>
<dbReference type="IntAct" id="Q24297">
    <property type="interactions" value="25"/>
</dbReference>
<dbReference type="STRING" id="7227.FBpp0087118"/>
<dbReference type="PaxDb" id="7227-FBpp0087118"/>
<dbReference type="DNASU" id="36314"/>
<dbReference type="EnsemblMetazoa" id="FBtr0088010">
    <property type="protein sequence ID" value="FBpp0087118"/>
    <property type="gene ID" value="FBgn0000426"/>
</dbReference>
<dbReference type="GeneID" id="36314"/>
<dbReference type="KEGG" id="dme:Dmel_CG16792"/>
<dbReference type="AGR" id="FB:FBgn0000426"/>
<dbReference type="CTD" id="36314"/>
<dbReference type="FlyBase" id="FBgn0000426">
    <property type="gene designation" value="SmF"/>
</dbReference>
<dbReference type="VEuPathDB" id="VectorBase:FBgn0000426"/>
<dbReference type="eggNOG" id="KOG3482">
    <property type="taxonomic scope" value="Eukaryota"/>
</dbReference>
<dbReference type="GeneTree" id="ENSGT00940000154818"/>
<dbReference type="HOGENOM" id="CLU_076902_12_1_1"/>
<dbReference type="InParanoid" id="Q24297"/>
<dbReference type="OMA" id="GYMNVQL"/>
<dbReference type="OrthoDB" id="409625at2759"/>
<dbReference type="PhylomeDB" id="Q24297"/>
<dbReference type="Reactome" id="R-DME-111367">
    <property type="pathway name" value="SLBP independent Processing of Histone Pre-mRNAs"/>
</dbReference>
<dbReference type="Reactome" id="R-DME-72163">
    <property type="pathway name" value="mRNA Splicing - Major Pathway"/>
</dbReference>
<dbReference type="Reactome" id="R-DME-72165">
    <property type="pathway name" value="mRNA Splicing - Minor Pathway"/>
</dbReference>
<dbReference type="Reactome" id="R-DME-73856">
    <property type="pathway name" value="RNA Polymerase II Transcription Termination"/>
</dbReference>
<dbReference type="Reactome" id="R-DME-77588">
    <property type="pathway name" value="SLBP Dependent Processing of Replication-Dependent Histone Pre-mRNAs"/>
</dbReference>
<dbReference type="BioGRID-ORCS" id="36314">
    <property type="hits" value="1 hit in 1 CRISPR screen"/>
</dbReference>
<dbReference type="GenomeRNAi" id="36314"/>
<dbReference type="PRO" id="PR:Q24297"/>
<dbReference type="Proteomes" id="UP000000803">
    <property type="component" value="Chromosome 2R"/>
</dbReference>
<dbReference type="Bgee" id="FBgn0000426">
    <property type="expression patterns" value="Expressed in eye disc (Drosophila) and 94 other cell types or tissues"/>
</dbReference>
<dbReference type="GO" id="GO:0071013">
    <property type="term" value="C:catalytic step 2 spliceosome"/>
    <property type="evidence" value="ECO:0007005"/>
    <property type="project" value="FlyBase"/>
</dbReference>
<dbReference type="GO" id="GO:0005829">
    <property type="term" value="C:cytosol"/>
    <property type="evidence" value="ECO:0007669"/>
    <property type="project" value="UniProtKB-SubCell"/>
</dbReference>
<dbReference type="GO" id="GO:0034715">
    <property type="term" value="C:pICln-Sm protein complex"/>
    <property type="evidence" value="ECO:0000318"/>
    <property type="project" value="GO_Central"/>
</dbReference>
<dbReference type="GO" id="GO:0071011">
    <property type="term" value="C:precatalytic spliceosome"/>
    <property type="evidence" value="ECO:0007005"/>
    <property type="project" value="FlyBase"/>
</dbReference>
<dbReference type="GO" id="GO:0030532">
    <property type="term" value="C:small nuclear ribonucleoprotein complex"/>
    <property type="evidence" value="ECO:0000250"/>
    <property type="project" value="FlyBase"/>
</dbReference>
<dbReference type="GO" id="GO:0005681">
    <property type="term" value="C:spliceosomal complex"/>
    <property type="evidence" value="ECO:0000250"/>
    <property type="project" value="FlyBase"/>
</dbReference>
<dbReference type="GO" id="GO:0005685">
    <property type="term" value="C:U1 snRNP"/>
    <property type="evidence" value="ECO:0000318"/>
    <property type="project" value="GO_Central"/>
</dbReference>
<dbReference type="GO" id="GO:0003723">
    <property type="term" value="F:RNA binding"/>
    <property type="evidence" value="ECO:0000250"/>
    <property type="project" value="FlyBase"/>
</dbReference>
<dbReference type="GO" id="GO:0000398">
    <property type="term" value="P:mRNA splicing, via spliceosome"/>
    <property type="evidence" value="ECO:0000250"/>
    <property type="project" value="FlyBase"/>
</dbReference>
<dbReference type="CDD" id="cd01722">
    <property type="entry name" value="Sm_F"/>
    <property type="match status" value="1"/>
</dbReference>
<dbReference type="FunFam" id="2.30.30.100:FF:000011">
    <property type="entry name" value="small nuclear ribonucleoprotein F"/>
    <property type="match status" value="1"/>
</dbReference>
<dbReference type="Gene3D" id="2.30.30.100">
    <property type="match status" value="1"/>
</dbReference>
<dbReference type="InterPro" id="IPR016487">
    <property type="entry name" value="Lsm6/sSmF"/>
</dbReference>
<dbReference type="InterPro" id="IPR010920">
    <property type="entry name" value="LSM_dom_sf"/>
</dbReference>
<dbReference type="InterPro" id="IPR047575">
    <property type="entry name" value="Sm"/>
</dbReference>
<dbReference type="InterPro" id="IPR001163">
    <property type="entry name" value="Sm_dom_euk/arc"/>
</dbReference>
<dbReference type="InterPro" id="IPR034100">
    <property type="entry name" value="Sm_F"/>
</dbReference>
<dbReference type="PANTHER" id="PTHR11021:SF0">
    <property type="entry name" value="SMALL NUCLEAR RIBONUCLEOPROTEIN F"/>
    <property type="match status" value="1"/>
</dbReference>
<dbReference type="PANTHER" id="PTHR11021">
    <property type="entry name" value="SMALL NUCLEAR RIBONUCLEOPROTEIN F SNRNP-F"/>
    <property type="match status" value="1"/>
</dbReference>
<dbReference type="Pfam" id="PF01423">
    <property type="entry name" value="LSM"/>
    <property type="match status" value="1"/>
</dbReference>
<dbReference type="PIRSF" id="PIRSF006609">
    <property type="entry name" value="snRNP_SmF"/>
    <property type="match status" value="1"/>
</dbReference>
<dbReference type="SMART" id="SM00651">
    <property type="entry name" value="Sm"/>
    <property type="match status" value="1"/>
</dbReference>
<dbReference type="SUPFAM" id="SSF50182">
    <property type="entry name" value="Sm-like ribonucleoproteins"/>
    <property type="match status" value="1"/>
</dbReference>
<dbReference type="PROSITE" id="PS52002">
    <property type="entry name" value="SM"/>
    <property type="match status" value="1"/>
</dbReference>
<feature type="chain" id="PRO_0000125539" description="Small nuclear ribonucleoprotein F">
    <location>
        <begin position="1"/>
        <end position="88"/>
    </location>
</feature>
<feature type="domain" description="Sm" evidence="2">
    <location>
        <begin position="8"/>
        <end position="80"/>
    </location>
</feature>
<feature type="sequence conflict" description="In Ref. 1; AAA28445." evidence="4" ref="1">
    <original>MRD</original>
    <variation>CATSQWIHLHTPTPYF</variation>
    <location>
        <begin position="86"/>
        <end position="88"/>
    </location>
</feature>
<sequence>MSAGMPINPKPFLNGLTGKPVLVKLKWGQEYKGFLVSVDGYMNMQLANTEEVIEGSVTGNLGEVLIRCNNVLYIKGMEDDDEEGEMRD</sequence>
<gene>
    <name type="primary">SmF</name>
    <name type="synonym">DebB</name>
    <name type="ORF">CG16792</name>
</gene>
<comment type="function">
    <text evidence="1">Plays a role in pre-mRNA splicing as a core component of the spliceosomal U1, U2, U4 and U5 small nuclear ribonucleoproteins (snRNPs), the building blocks of the spliceosome (By similarity).</text>
</comment>
<comment type="subunit">
    <text evidence="3">Interacts with the SMN complex.</text>
</comment>
<comment type="interaction">
    <interactant intactId="EBI-153111">
        <id>Q24297</id>
    </interactant>
    <interactant intactId="EBI-141849">
        <id>Q9VI10</id>
        <label>SmD2</label>
    </interactant>
    <organismsDiffer>false</organismsDiffer>
    <experiments>3</experiments>
</comment>
<comment type="interaction">
    <interactant intactId="EBI-153111">
        <id>Q24297</id>
    </interactant>
    <interactant intactId="EBI-127642">
        <id>Q9VLV5</id>
        <label>SmE</label>
    </interactant>
    <organismsDiffer>false</organismsDiffer>
    <experiments>5</experiments>
</comment>
<comment type="subcellular location">
    <subcellularLocation>
        <location evidence="1">Nucleus</location>
    </subcellularLocation>
    <subcellularLocation>
        <location evidence="1">Cytoplasm</location>
        <location evidence="1">Cytosol</location>
    </subcellularLocation>
</comment>
<comment type="similarity">
    <text evidence="4">Belongs to the snRNP Sm proteins family. SmF/LSm6 subfamily.</text>
</comment>
<evidence type="ECO:0000250" key="1">
    <source>
        <dbReference type="UniProtKB" id="P62306"/>
    </source>
</evidence>
<evidence type="ECO:0000255" key="2">
    <source>
        <dbReference type="PROSITE-ProRule" id="PRU01346"/>
    </source>
</evidence>
<evidence type="ECO:0000269" key="3">
    <source>
    </source>
</evidence>
<evidence type="ECO:0000305" key="4"/>
<keyword id="KW-0963">Cytoplasm</keyword>
<keyword id="KW-0507">mRNA processing</keyword>
<keyword id="KW-0508">mRNA splicing</keyword>
<keyword id="KW-0539">Nucleus</keyword>
<keyword id="KW-1185">Reference proteome</keyword>
<keyword id="KW-0687">Ribonucleoprotein</keyword>
<keyword id="KW-0694">RNA-binding</keyword>
<keyword id="KW-0747">Spliceosome</keyword>
<reference key="1">
    <citation type="journal article" date="1990" name="Biochim. Biophys. Acta">
        <title>Sequence and expression of two regulated transcription units during Drosophila melanogaster development: Deb-A and Deb-B.</title>
        <authorList>
            <person name="Vincent W.S. III"/>
            <person name="Goldstein E.S."/>
            <person name="Allen S.A."/>
        </authorList>
    </citation>
    <scope>NUCLEOTIDE SEQUENCE</scope>
</reference>
<reference key="2">
    <citation type="journal article" date="2000" name="Science">
        <title>The genome sequence of Drosophila melanogaster.</title>
        <authorList>
            <person name="Adams M.D."/>
            <person name="Celniker S.E."/>
            <person name="Holt R.A."/>
            <person name="Evans C.A."/>
            <person name="Gocayne J.D."/>
            <person name="Amanatides P.G."/>
            <person name="Scherer S.E."/>
            <person name="Li P.W."/>
            <person name="Hoskins R.A."/>
            <person name="Galle R.F."/>
            <person name="George R.A."/>
            <person name="Lewis S.E."/>
            <person name="Richards S."/>
            <person name="Ashburner M."/>
            <person name="Henderson S.N."/>
            <person name="Sutton G.G."/>
            <person name="Wortman J.R."/>
            <person name="Yandell M.D."/>
            <person name="Zhang Q."/>
            <person name="Chen L.X."/>
            <person name="Brandon R.C."/>
            <person name="Rogers Y.-H.C."/>
            <person name="Blazej R.G."/>
            <person name="Champe M."/>
            <person name="Pfeiffer B.D."/>
            <person name="Wan K.H."/>
            <person name="Doyle C."/>
            <person name="Baxter E.G."/>
            <person name="Helt G."/>
            <person name="Nelson C.R."/>
            <person name="Miklos G.L.G."/>
            <person name="Abril J.F."/>
            <person name="Agbayani A."/>
            <person name="An H.-J."/>
            <person name="Andrews-Pfannkoch C."/>
            <person name="Baldwin D."/>
            <person name="Ballew R.M."/>
            <person name="Basu A."/>
            <person name="Baxendale J."/>
            <person name="Bayraktaroglu L."/>
            <person name="Beasley E.M."/>
            <person name="Beeson K.Y."/>
            <person name="Benos P.V."/>
            <person name="Berman B.P."/>
            <person name="Bhandari D."/>
            <person name="Bolshakov S."/>
            <person name="Borkova D."/>
            <person name="Botchan M.R."/>
            <person name="Bouck J."/>
            <person name="Brokstein P."/>
            <person name="Brottier P."/>
            <person name="Burtis K.C."/>
            <person name="Busam D.A."/>
            <person name="Butler H."/>
            <person name="Cadieu E."/>
            <person name="Center A."/>
            <person name="Chandra I."/>
            <person name="Cherry J.M."/>
            <person name="Cawley S."/>
            <person name="Dahlke C."/>
            <person name="Davenport L.B."/>
            <person name="Davies P."/>
            <person name="de Pablos B."/>
            <person name="Delcher A."/>
            <person name="Deng Z."/>
            <person name="Mays A.D."/>
            <person name="Dew I."/>
            <person name="Dietz S.M."/>
            <person name="Dodson K."/>
            <person name="Doup L.E."/>
            <person name="Downes M."/>
            <person name="Dugan-Rocha S."/>
            <person name="Dunkov B.C."/>
            <person name="Dunn P."/>
            <person name="Durbin K.J."/>
            <person name="Evangelista C.C."/>
            <person name="Ferraz C."/>
            <person name="Ferriera S."/>
            <person name="Fleischmann W."/>
            <person name="Fosler C."/>
            <person name="Gabrielian A.E."/>
            <person name="Garg N.S."/>
            <person name="Gelbart W.M."/>
            <person name="Glasser K."/>
            <person name="Glodek A."/>
            <person name="Gong F."/>
            <person name="Gorrell J.H."/>
            <person name="Gu Z."/>
            <person name="Guan P."/>
            <person name="Harris M."/>
            <person name="Harris N.L."/>
            <person name="Harvey D.A."/>
            <person name="Heiman T.J."/>
            <person name="Hernandez J.R."/>
            <person name="Houck J."/>
            <person name="Hostin D."/>
            <person name="Houston K.A."/>
            <person name="Howland T.J."/>
            <person name="Wei M.-H."/>
            <person name="Ibegwam C."/>
            <person name="Jalali M."/>
            <person name="Kalush F."/>
            <person name="Karpen G.H."/>
            <person name="Ke Z."/>
            <person name="Kennison J.A."/>
            <person name="Ketchum K.A."/>
            <person name="Kimmel B.E."/>
            <person name="Kodira C.D."/>
            <person name="Kraft C.L."/>
            <person name="Kravitz S."/>
            <person name="Kulp D."/>
            <person name="Lai Z."/>
            <person name="Lasko P."/>
            <person name="Lei Y."/>
            <person name="Levitsky A.A."/>
            <person name="Li J.H."/>
            <person name="Li Z."/>
            <person name="Liang Y."/>
            <person name="Lin X."/>
            <person name="Liu X."/>
            <person name="Mattei B."/>
            <person name="McIntosh T.C."/>
            <person name="McLeod M.P."/>
            <person name="McPherson D."/>
            <person name="Merkulov G."/>
            <person name="Milshina N.V."/>
            <person name="Mobarry C."/>
            <person name="Morris J."/>
            <person name="Moshrefi A."/>
            <person name="Mount S.M."/>
            <person name="Moy M."/>
            <person name="Murphy B."/>
            <person name="Murphy L."/>
            <person name="Muzny D.M."/>
            <person name="Nelson D.L."/>
            <person name="Nelson D.R."/>
            <person name="Nelson K.A."/>
            <person name="Nixon K."/>
            <person name="Nusskern D.R."/>
            <person name="Pacleb J.M."/>
            <person name="Palazzolo M."/>
            <person name="Pittman G.S."/>
            <person name="Pan S."/>
            <person name="Pollard J."/>
            <person name="Puri V."/>
            <person name="Reese M.G."/>
            <person name="Reinert K."/>
            <person name="Remington K."/>
            <person name="Saunders R.D.C."/>
            <person name="Scheeler F."/>
            <person name="Shen H."/>
            <person name="Shue B.C."/>
            <person name="Siden-Kiamos I."/>
            <person name="Simpson M."/>
            <person name="Skupski M.P."/>
            <person name="Smith T.J."/>
            <person name="Spier E."/>
            <person name="Spradling A.C."/>
            <person name="Stapleton M."/>
            <person name="Strong R."/>
            <person name="Sun E."/>
            <person name="Svirskas R."/>
            <person name="Tector C."/>
            <person name="Turner R."/>
            <person name="Venter E."/>
            <person name="Wang A.H."/>
            <person name="Wang X."/>
            <person name="Wang Z.-Y."/>
            <person name="Wassarman D.A."/>
            <person name="Weinstock G.M."/>
            <person name="Weissenbach J."/>
            <person name="Williams S.M."/>
            <person name="Woodage T."/>
            <person name="Worley K.C."/>
            <person name="Wu D."/>
            <person name="Yang S."/>
            <person name="Yao Q.A."/>
            <person name="Ye J."/>
            <person name="Yeh R.-F."/>
            <person name="Zaveri J.S."/>
            <person name="Zhan M."/>
            <person name="Zhang G."/>
            <person name="Zhao Q."/>
            <person name="Zheng L."/>
            <person name="Zheng X.H."/>
            <person name="Zhong F.N."/>
            <person name="Zhong W."/>
            <person name="Zhou X."/>
            <person name="Zhu S.C."/>
            <person name="Zhu X."/>
            <person name="Smith H.O."/>
            <person name="Gibbs R.A."/>
            <person name="Myers E.W."/>
            <person name="Rubin G.M."/>
            <person name="Venter J.C."/>
        </authorList>
    </citation>
    <scope>NUCLEOTIDE SEQUENCE [LARGE SCALE GENOMIC DNA]</scope>
    <source>
        <strain>Berkeley</strain>
    </source>
</reference>
<reference key="3">
    <citation type="journal article" date="2002" name="Genome Biol.">
        <title>Annotation of the Drosophila melanogaster euchromatic genome: a systematic review.</title>
        <authorList>
            <person name="Misra S."/>
            <person name="Crosby M.A."/>
            <person name="Mungall C.J."/>
            <person name="Matthews B.B."/>
            <person name="Campbell K.S."/>
            <person name="Hradecky P."/>
            <person name="Huang Y."/>
            <person name="Kaminker J.S."/>
            <person name="Millburn G.H."/>
            <person name="Prochnik S.E."/>
            <person name="Smith C.D."/>
            <person name="Tupy J.L."/>
            <person name="Whitfield E.J."/>
            <person name="Bayraktaroglu L."/>
            <person name="Berman B.P."/>
            <person name="Bettencourt B.R."/>
            <person name="Celniker S.E."/>
            <person name="de Grey A.D.N.J."/>
            <person name="Drysdale R.A."/>
            <person name="Harris N.L."/>
            <person name="Richter J."/>
            <person name="Russo S."/>
            <person name="Schroeder A.J."/>
            <person name="Shu S.Q."/>
            <person name="Stapleton M."/>
            <person name="Yamada C."/>
            <person name="Ashburner M."/>
            <person name="Gelbart W.M."/>
            <person name="Rubin G.M."/>
            <person name="Lewis S.E."/>
        </authorList>
    </citation>
    <scope>GENOME REANNOTATION</scope>
    <source>
        <strain>Berkeley</strain>
    </source>
</reference>
<reference key="4">
    <citation type="journal article" date="2002" name="Genome Biol.">
        <title>A Drosophila full-length cDNA resource.</title>
        <authorList>
            <person name="Stapleton M."/>
            <person name="Carlson J.W."/>
            <person name="Brokstein P."/>
            <person name="Yu C."/>
            <person name="Champe M."/>
            <person name="George R.A."/>
            <person name="Guarin H."/>
            <person name="Kronmiller B."/>
            <person name="Pacleb J.M."/>
            <person name="Park S."/>
            <person name="Wan K.H."/>
            <person name="Rubin G.M."/>
            <person name="Celniker S.E."/>
        </authorList>
    </citation>
    <scope>NUCLEOTIDE SEQUENCE [LARGE SCALE MRNA]</scope>
    <source>
        <strain>Berkeley</strain>
        <tissue>Ovary</tissue>
    </source>
</reference>
<reference key="5">
    <citation type="journal article" date="2008" name="Proc. Natl. Acad. Sci. U.S.A.">
        <title>Evolution of an RNP assembly system: a minimal SMN complex facilitates formation of UsnRNPs in Drosophila melanogaster.</title>
        <authorList>
            <person name="Kroiss M."/>
            <person name="Schultz J."/>
            <person name="Wiesner J."/>
            <person name="Chari A."/>
            <person name="Sickmann A."/>
            <person name="Fischer U."/>
        </authorList>
    </citation>
    <scope>INTERACTION WITH THE SMN COMPLEX</scope>
</reference>
<accession>Q24297</accession>
<accession>Q9V672</accession>
<name>RUXF_DROME</name>
<proteinExistence type="evidence at protein level"/>
<organism>
    <name type="scientific">Drosophila melanogaster</name>
    <name type="common">Fruit fly</name>
    <dbReference type="NCBI Taxonomy" id="7227"/>
    <lineage>
        <taxon>Eukaryota</taxon>
        <taxon>Metazoa</taxon>
        <taxon>Ecdysozoa</taxon>
        <taxon>Arthropoda</taxon>
        <taxon>Hexapoda</taxon>
        <taxon>Insecta</taxon>
        <taxon>Pterygota</taxon>
        <taxon>Neoptera</taxon>
        <taxon>Endopterygota</taxon>
        <taxon>Diptera</taxon>
        <taxon>Brachycera</taxon>
        <taxon>Muscomorpha</taxon>
        <taxon>Ephydroidea</taxon>
        <taxon>Drosophilidae</taxon>
        <taxon>Drosophila</taxon>
        <taxon>Sophophora</taxon>
    </lineage>
</organism>
<protein>
    <recommendedName>
        <fullName>Small nuclear ribonucleoprotein F</fullName>
        <shortName>snRNP-F</shortName>
    </recommendedName>
    <alternativeName>
        <fullName>Membrane-associated protein Deb-B</fullName>
    </alternativeName>
    <alternativeName>
        <fullName>Sm protein F</fullName>
        <shortName>Sm-F</shortName>
        <shortName>SmF</shortName>
    </alternativeName>
</protein>